<feature type="chain" id="PRO_0000067731" description="DNA-directed RNA polymerase subunit beta'">
    <location>
        <begin position="1"/>
        <end position="1396"/>
    </location>
</feature>
<feature type="binding site" evidence="1">
    <location>
        <position position="70"/>
    </location>
    <ligand>
        <name>Zn(2+)</name>
        <dbReference type="ChEBI" id="CHEBI:29105"/>
        <label>1</label>
    </ligand>
</feature>
<feature type="binding site" evidence="1">
    <location>
        <position position="72"/>
    </location>
    <ligand>
        <name>Zn(2+)</name>
        <dbReference type="ChEBI" id="CHEBI:29105"/>
        <label>1</label>
    </ligand>
</feature>
<feature type="binding site" evidence="1">
    <location>
        <position position="85"/>
    </location>
    <ligand>
        <name>Zn(2+)</name>
        <dbReference type="ChEBI" id="CHEBI:29105"/>
        <label>1</label>
    </ligand>
</feature>
<feature type="binding site" evidence="1">
    <location>
        <position position="88"/>
    </location>
    <ligand>
        <name>Zn(2+)</name>
        <dbReference type="ChEBI" id="CHEBI:29105"/>
        <label>1</label>
    </ligand>
</feature>
<feature type="binding site" evidence="1">
    <location>
        <position position="460"/>
    </location>
    <ligand>
        <name>Mg(2+)</name>
        <dbReference type="ChEBI" id="CHEBI:18420"/>
    </ligand>
</feature>
<feature type="binding site" evidence="1">
    <location>
        <position position="462"/>
    </location>
    <ligand>
        <name>Mg(2+)</name>
        <dbReference type="ChEBI" id="CHEBI:18420"/>
    </ligand>
</feature>
<feature type="binding site" evidence="1">
    <location>
        <position position="464"/>
    </location>
    <ligand>
        <name>Mg(2+)</name>
        <dbReference type="ChEBI" id="CHEBI:18420"/>
    </ligand>
</feature>
<feature type="binding site" evidence="1">
    <location>
        <position position="814"/>
    </location>
    <ligand>
        <name>Zn(2+)</name>
        <dbReference type="ChEBI" id="CHEBI:29105"/>
        <label>2</label>
    </ligand>
</feature>
<feature type="binding site" evidence="1">
    <location>
        <position position="888"/>
    </location>
    <ligand>
        <name>Zn(2+)</name>
        <dbReference type="ChEBI" id="CHEBI:29105"/>
        <label>2</label>
    </ligand>
</feature>
<feature type="binding site" evidence="1">
    <location>
        <position position="895"/>
    </location>
    <ligand>
        <name>Zn(2+)</name>
        <dbReference type="ChEBI" id="CHEBI:29105"/>
        <label>2</label>
    </ligand>
</feature>
<feature type="binding site" evidence="1">
    <location>
        <position position="898"/>
    </location>
    <ligand>
        <name>Zn(2+)</name>
        <dbReference type="ChEBI" id="CHEBI:29105"/>
        <label>2</label>
    </ligand>
</feature>
<dbReference type="EC" id="2.7.7.6" evidence="1"/>
<dbReference type="EMBL" id="AE016825">
    <property type="protein sequence ID" value="AAQ61852.1"/>
    <property type="molecule type" value="Genomic_DNA"/>
</dbReference>
<dbReference type="RefSeq" id="WP_011137739.1">
    <property type="nucleotide sequence ID" value="NC_005085.1"/>
</dbReference>
<dbReference type="SMR" id="Q7NQE7"/>
<dbReference type="STRING" id="243365.CV_4192"/>
<dbReference type="KEGG" id="cvi:CV_4192"/>
<dbReference type="eggNOG" id="COG0086">
    <property type="taxonomic scope" value="Bacteria"/>
</dbReference>
<dbReference type="HOGENOM" id="CLU_000524_3_1_4"/>
<dbReference type="OrthoDB" id="9815296at2"/>
<dbReference type="Proteomes" id="UP000001424">
    <property type="component" value="Chromosome"/>
</dbReference>
<dbReference type="GO" id="GO:0000428">
    <property type="term" value="C:DNA-directed RNA polymerase complex"/>
    <property type="evidence" value="ECO:0007669"/>
    <property type="project" value="UniProtKB-KW"/>
</dbReference>
<dbReference type="GO" id="GO:0003677">
    <property type="term" value="F:DNA binding"/>
    <property type="evidence" value="ECO:0007669"/>
    <property type="project" value="UniProtKB-UniRule"/>
</dbReference>
<dbReference type="GO" id="GO:0003899">
    <property type="term" value="F:DNA-directed RNA polymerase activity"/>
    <property type="evidence" value="ECO:0007669"/>
    <property type="project" value="UniProtKB-UniRule"/>
</dbReference>
<dbReference type="GO" id="GO:0000287">
    <property type="term" value="F:magnesium ion binding"/>
    <property type="evidence" value="ECO:0007669"/>
    <property type="project" value="UniProtKB-UniRule"/>
</dbReference>
<dbReference type="GO" id="GO:0008270">
    <property type="term" value="F:zinc ion binding"/>
    <property type="evidence" value="ECO:0007669"/>
    <property type="project" value="UniProtKB-UniRule"/>
</dbReference>
<dbReference type="GO" id="GO:0006351">
    <property type="term" value="P:DNA-templated transcription"/>
    <property type="evidence" value="ECO:0007669"/>
    <property type="project" value="UniProtKB-UniRule"/>
</dbReference>
<dbReference type="CDD" id="cd02655">
    <property type="entry name" value="RNAP_beta'_C"/>
    <property type="match status" value="1"/>
</dbReference>
<dbReference type="CDD" id="cd01609">
    <property type="entry name" value="RNAP_beta'_N"/>
    <property type="match status" value="1"/>
</dbReference>
<dbReference type="FunFam" id="1.10.132.30:FF:000003">
    <property type="entry name" value="DNA-directed RNA polymerase subunit beta"/>
    <property type="match status" value="1"/>
</dbReference>
<dbReference type="FunFam" id="1.10.150.390:FF:000002">
    <property type="entry name" value="DNA-directed RNA polymerase subunit beta"/>
    <property type="match status" value="1"/>
</dbReference>
<dbReference type="FunFam" id="4.10.860.120:FF:000001">
    <property type="entry name" value="DNA-directed RNA polymerase subunit beta"/>
    <property type="match status" value="1"/>
</dbReference>
<dbReference type="Gene3D" id="1.10.132.30">
    <property type="match status" value="1"/>
</dbReference>
<dbReference type="Gene3D" id="1.10.150.390">
    <property type="match status" value="1"/>
</dbReference>
<dbReference type="Gene3D" id="1.10.1790.20">
    <property type="match status" value="1"/>
</dbReference>
<dbReference type="Gene3D" id="1.10.40.90">
    <property type="match status" value="1"/>
</dbReference>
<dbReference type="Gene3D" id="2.40.40.20">
    <property type="match status" value="1"/>
</dbReference>
<dbReference type="Gene3D" id="2.40.50.100">
    <property type="match status" value="3"/>
</dbReference>
<dbReference type="Gene3D" id="4.10.860.120">
    <property type="entry name" value="RNA polymerase II, clamp domain"/>
    <property type="match status" value="1"/>
</dbReference>
<dbReference type="Gene3D" id="1.10.274.100">
    <property type="entry name" value="RNA polymerase Rpb1, domain 3"/>
    <property type="match status" value="1"/>
</dbReference>
<dbReference type="HAMAP" id="MF_01322">
    <property type="entry name" value="RNApol_bact_RpoC"/>
    <property type="match status" value="1"/>
</dbReference>
<dbReference type="InterPro" id="IPR045867">
    <property type="entry name" value="DNA-dir_RpoC_beta_prime"/>
</dbReference>
<dbReference type="InterPro" id="IPR012754">
    <property type="entry name" value="DNA-dir_RpoC_beta_prime_bact"/>
</dbReference>
<dbReference type="InterPro" id="IPR000722">
    <property type="entry name" value="RNA_pol_asu"/>
</dbReference>
<dbReference type="InterPro" id="IPR006592">
    <property type="entry name" value="RNA_pol_N"/>
</dbReference>
<dbReference type="InterPro" id="IPR007080">
    <property type="entry name" value="RNA_pol_Rpb1_1"/>
</dbReference>
<dbReference type="InterPro" id="IPR007066">
    <property type="entry name" value="RNA_pol_Rpb1_3"/>
</dbReference>
<dbReference type="InterPro" id="IPR042102">
    <property type="entry name" value="RNA_pol_Rpb1_3_sf"/>
</dbReference>
<dbReference type="InterPro" id="IPR007083">
    <property type="entry name" value="RNA_pol_Rpb1_4"/>
</dbReference>
<dbReference type="InterPro" id="IPR007081">
    <property type="entry name" value="RNA_pol_Rpb1_5"/>
</dbReference>
<dbReference type="InterPro" id="IPR044893">
    <property type="entry name" value="RNA_pol_Rpb1_clamp_domain"/>
</dbReference>
<dbReference type="InterPro" id="IPR038120">
    <property type="entry name" value="Rpb1_funnel_sf"/>
</dbReference>
<dbReference type="NCBIfam" id="TIGR02386">
    <property type="entry name" value="rpoC_TIGR"/>
    <property type="match status" value="1"/>
</dbReference>
<dbReference type="PANTHER" id="PTHR19376">
    <property type="entry name" value="DNA-DIRECTED RNA POLYMERASE"/>
    <property type="match status" value="1"/>
</dbReference>
<dbReference type="PANTHER" id="PTHR19376:SF54">
    <property type="entry name" value="DNA-DIRECTED RNA POLYMERASE SUBUNIT BETA"/>
    <property type="match status" value="1"/>
</dbReference>
<dbReference type="Pfam" id="PF04997">
    <property type="entry name" value="RNA_pol_Rpb1_1"/>
    <property type="match status" value="1"/>
</dbReference>
<dbReference type="Pfam" id="PF00623">
    <property type="entry name" value="RNA_pol_Rpb1_2"/>
    <property type="match status" value="2"/>
</dbReference>
<dbReference type="Pfam" id="PF04983">
    <property type="entry name" value="RNA_pol_Rpb1_3"/>
    <property type="match status" value="1"/>
</dbReference>
<dbReference type="Pfam" id="PF05000">
    <property type="entry name" value="RNA_pol_Rpb1_4"/>
    <property type="match status" value="1"/>
</dbReference>
<dbReference type="Pfam" id="PF04998">
    <property type="entry name" value="RNA_pol_Rpb1_5"/>
    <property type="match status" value="1"/>
</dbReference>
<dbReference type="SMART" id="SM00663">
    <property type="entry name" value="RPOLA_N"/>
    <property type="match status" value="1"/>
</dbReference>
<dbReference type="SUPFAM" id="SSF64484">
    <property type="entry name" value="beta and beta-prime subunits of DNA dependent RNA-polymerase"/>
    <property type="match status" value="1"/>
</dbReference>
<protein>
    <recommendedName>
        <fullName evidence="1">DNA-directed RNA polymerase subunit beta'</fullName>
        <shortName evidence="1">RNAP subunit beta'</shortName>
        <ecNumber evidence="1">2.7.7.6</ecNumber>
    </recommendedName>
    <alternativeName>
        <fullName evidence="1">RNA polymerase subunit beta'</fullName>
    </alternativeName>
    <alternativeName>
        <fullName evidence="1">Transcriptase subunit beta'</fullName>
    </alternativeName>
</protein>
<organism>
    <name type="scientific">Chromobacterium violaceum (strain ATCC 12472 / DSM 30191 / JCM 1249 / CCUG 213 / NBRC 12614 / NCIMB 9131 / NCTC 9757 / MK)</name>
    <dbReference type="NCBI Taxonomy" id="243365"/>
    <lineage>
        <taxon>Bacteria</taxon>
        <taxon>Pseudomonadati</taxon>
        <taxon>Pseudomonadota</taxon>
        <taxon>Betaproteobacteria</taxon>
        <taxon>Neisseriales</taxon>
        <taxon>Chromobacteriaceae</taxon>
        <taxon>Chromobacterium</taxon>
    </lineage>
</organism>
<name>RPOC_CHRVO</name>
<keyword id="KW-0240">DNA-directed RNA polymerase</keyword>
<keyword id="KW-0460">Magnesium</keyword>
<keyword id="KW-0479">Metal-binding</keyword>
<keyword id="KW-0548">Nucleotidyltransferase</keyword>
<keyword id="KW-1185">Reference proteome</keyword>
<keyword id="KW-0804">Transcription</keyword>
<keyword id="KW-0808">Transferase</keyword>
<keyword id="KW-0862">Zinc</keyword>
<sequence>MKALLDLFKQVTQEEEFDAIKIGIASPDKIRSWSYGEVKKPETINYRTFKPERDGLFCARIFGPVKDYECLCGKYKRLKHRGVICEKCGVEVTLSKVRRERMGHIELASPTAHIWFLKSLPSRLGMVLDMTLRDIERVLYFEAYVVTDPGMTPMQYRQLLTEEDFLDKEDQYGEEFVAMMGAEAVKELLKKLDLDAEIEGLRRELETTNSDTKIKKIAKRLKVLEAFQRSGMKPEWMILEVLPVLPPELRPLVPLDGGRFATSDLNDLYRRVINRNNRLKRLLELRAPDIIVRNEKRMLQESVDSLLDNGRRGKAMTGANKRPLKSLADMIKGKGGRFRQNLLGKRVDYSGRSVITVGPTLRLHQCGLPKKMALELFKPFIFHKLEVMGLASTIKAAKKLVEQEVPEVWDILEEVIREHPVLLNRAPTLHRLGIQAFEPVLIEGKAIQLHPLVCAAFNADFDGDQMAVHVPLSLEAQMEARTLMLATNNVLSPANGEPIIVPSQDIVLGLYYMTRDKVNGKGEGMVFADTKEVHRAYETRQVELATRITVRLKEWEKDEQGEFQPVIKRYNTTVGRAILSDILPKGLPFEHINKALKKKEISKLINVSFRRCGIRDTVIFADQLMYTGFAYSTRGGISICVDDMQIPVKKSELLGEANKEVKEIEEQYRQGLVTQGERYNKVVDIWGRTGDKIAKAMMDELSKQKVLDREGKEVDQESFNSIYMMADSGARGSAAQIKQLAGMRGLMAKPDGSIIETPITANFREGLTVLQYFISTHGARKGLADTALKTANSGYLTRRLVDVTQDLVVIEDDCGTSNGFTMKAVLQGGDVIEALRDRILGRVTAVDVVDPSTGETVIEAGTLMDEHLVDLVDSLGIDEVKVRTAITCDTRYGLCAKCYGRDLARGKQVNAGEAIGVIAAQSIGEPGTQLTMRTFHIGGAASRNAAASQVEGKSNGTVRFSSQMRYVANTKGELIVITRSGEVVIHDDMGRERERRKVPYGATLMVTDGLQIKAGAVLATWDPHTRPIITEYAGRVKFENVEEGNTVAKQTDEVTGLSTLVVIDPKRRAGSQSKMLRPLVKLLDDNGNEVKLAGSDASVSITFQVGAIITVRDGQDVGKGEVLARIPQESSKTRDITGGLPRVAELFEARSPKDAGMLAEVTGTVSFGKDTKGKQRLIITDLEGNGYENLIPKDKHVLVHDGQVVNRGESIVDGPVDPHDILRLQGIEALARYIVQEVQEVYRLQGVKINDKHIEVIIRQMLRRVIITDSGDTEFIQGEQVERADVLEMNDKMMAENKEPAQYENVLLGITKASLSTDSFISAASFQETTRVLTEAAIMGKRDDLRGLKENVIVGRLIPAGTGLAYHRTRRRQNLGLDAGESMLFDPAPAALESGE</sequence>
<evidence type="ECO:0000255" key="1">
    <source>
        <dbReference type="HAMAP-Rule" id="MF_01322"/>
    </source>
</evidence>
<comment type="function">
    <text evidence="1">DNA-dependent RNA polymerase catalyzes the transcription of DNA into RNA using the four ribonucleoside triphosphates as substrates.</text>
</comment>
<comment type="catalytic activity">
    <reaction evidence="1">
        <text>RNA(n) + a ribonucleoside 5'-triphosphate = RNA(n+1) + diphosphate</text>
        <dbReference type="Rhea" id="RHEA:21248"/>
        <dbReference type="Rhea" id="RHEA-COMP:14527"/>
        <dbReference type="Rhea" id="RHEA-COMP:17342"/>
        <dbReference type="ChEBI" id="CHEBI:33019"/>
        <dbReference type="ChEBI" id="CHEBI:61557"/>
        <dbReference type="ChEBI" id="CHEBI:140395"/>
        <dbReference type="EC" id="2.7.7.6"/>
    </reaction>
</comment>
<comment type="cofactor">
    <cofactor evidence="1">
        <name>Mg(2+)</name>
        <dbReference type="ChEBI" id="CHEBI:18420"/>
    </cofactor>
    <text evidence="1">Binds 1 Mg(2+) ion per subunit.</text>
</comment>
<comment type="cofactor">
    <cofactor evidence="1">
        <name>Zn(2+)</name>
        <dbReference type="ChEBI" id="CHEBI:29105"/>
    </cofactor>
    <text evidence="1">Binds 2 Zn(2+) ions per subunit.</text>
</comment>
<comment type="subunit">
    <text evidence="1">The RNAP catalytic core consists of 2 alpha, 1 beta, 1 beta' and 1 omega subunit. When a sigma factor is associated with the core the holoenzyme is formed, which can initiate transcription.</text>
</comment>
<comment type="similarity">
    <text evidence="1">Belongs to the RNA polymerase beta' chain family.</text>
</comment>
<accession>Q7NQE7</accession>
<reference key="1">
    <citation type="journal article" date="2003" name="Proc. Natl. Acad. Sci. U.S.A.">
        <title>The complete genome sequence of Chromobacterium violaceum reveals remarkable and exploitable bacterial adaptability.</title>
        <authorList>
            <person name="Vasconcelos A.T.R."/>
            <person name="de Almeida D.F."/>
            <person name="Hungria M."/>
            <person name="Guimaraes C.T."/>
            <person name="Antonio R.V."/>
            <person name="Almeida F.C."/>
            <person name="de Almeida L.G.P."/>
            <person name="de Almeida R."/>
            <person name="Alves-Gomes J.A."/>
            <person name="Andrade E.M."/>
            <person name="Araripe J."/>
            <person name="de Araujo M.F.F."/>
            <person name="Astolfi-Filho S."/>
            <person name="Azevedo V."/>
            <person name="Baptista A.J."/>
            <person name="Bataus L.A.M."/>
            <person name="Batista J.S."/>
            <person name="Belo A."/>
            <person name="van den Berg C."/>
            <person name="Bogo M."/>
            <person name="Bonatto S."/>
            <person name="Bordignon J."/>
            <person name="Brigido M.M."/>
            <person name="Brito C.A."/>
            <person name="Brocchi M."/>
            <person name="Burity H.A."/>
            <person name="Camargo A.A."/>
            <person name="Cardoso D.D.P."/>
            <person name="Carneiro N.P."/>
            <person name="Carraro D.M."/>
            <person name="Carvalho C.M.B."/>
            <person name="Cascardo J.C.M."/>
            <person name="Cavada B.S."/>
            <person name="Chueire L.M.O."/>
            <person name="Creczynski-Pasa T.B."/>
            <person name="Cunha-Junior N.C."/>
            <person name="Fagundes N."/>
            <person name="Falcao C.L."/>
            <person name="Fantinatti F."/>
            <person name="Farias I.P."/>
            <person name="Felipe M.S.S."/>
            <person name="Ferrari L.P."/>
            <person name="Ferro J.A."/>
            <person name="Ferro M.I.T."/>
            <person name="Franco G.R."/>
            <person name="Freitas N.S.A."/>
            <person name="Furlan L.R."/>
            <person name="Gazzinelli R.T."/>
            <person name="Gomes E.A."/>
            <person name="Goncalves P.R."/>
            <person name="Grangeiro T.B."/>
            <person name="Grattapaglia D."/>
            <person name="Grisard E.C."/>
            <person name="Hanna E.S."/>
            <person name="Jardim S.N."/>
            <person name="Laurino J."/>
            <person name="Leoi L.C.T."/>
            <person name="Lima L.F.A."/>
            <person name="Loureiro M.F."/>
            <person name="Lyra M.C.C.P."/>
            <person name="Madeira H.M.F."/>
            <person name="Manfio G.P."/>
            <person name="Maranhao A.Q."/>
            <person name="Martins W.S."/>
            <person name="di Mauro S.M.Z."/>
            <person name="de Medeiros S.R.B."/>
            <person name="Meissner R.V."/>
            <person name="Moreira M.A.M."/>
            <person name="Nascimento F.F."/>
            <person name="Nicolas M.F."/>
            <person name="Oliveira J.G."/>
            <person name="Oliveira S.C."/>
            <person name="Paixao R.F.C."/>
            <person name="Parente J.A."/>
            <person name="Pedrosa F.O."/>
            <person name="Pena S.D.J."/>
            <person name="Pereira J.O."/>
            <person name="Pereira M."/>
            <person name="Pinto L.S.R.C."/>
            <person name="Pinto L.S."/>
            <person name="Porto J.I.R."/>
            <person name="Potrich D.P."/>
            <person name="Ramalho-Neto C.E."/>
            <person name="Reis A.M.M."/>
            <person name="Rigo L.U."/>
            <person name="Rondinelli E."/>
            <person name="Santos E.B.P."/>
            <person name="Santos F.R."/>
            <person name="Schneider M.P.C."/>
            <person name="Seuanez H.N."/>
            <person name="Silva A.M.R."/>
            <person name="da Silva A.L.C."/>
            <person name="Silva D.W."/>
            <person name="Silva R."/>
            <person name="Simoes I.C."/>
            <person name="Simon D."/>
            <person name="Soares C.M.A."/>
            <person name="Soares R.B.A."/>
            <person name="Souza E.M."/>
            <person name="Souza K.R.L."/>
            <person name="Souza R.C."/>
            <person name="Steffens M.B.R."/>
            <person name="Steindel M."/>
            <person name="Teixeira S.R."/>
            <person name="Urmenyi T."/>
            <person name="Vettore A."/>
            <person name="Wassem R."/>
            <person name="Zaha A."/>
            <person name="Simpson A.J.G."/>
        </authorList>
    </citation>
    <scope>NUCLEOTIDE SEQUENCE [LARGE SCALE GENOMIC DNA]</scope>
    <source>
        <strain>ATCC 12472 / DSM 30191 / JCM 1249 / CCUG 213 / NBRC 12614 / NCIMB 9131 / NCTC 9757 / MK</strain>
    </source>
</reference>
<gene>
    <name evidence="1" type="primary">rpoC</name>
    <name type="ordered locus">CV_4192</name>
</gene>
<proteinExistence type="inferred from homology"/>